<evidence type="ECO:0000255" key="1">
    <source>
        <dbReference type="HAMAP-Rule" id="MF_00512"/>
    </source>
</evidence>
<evidence type="ECO:0000305" key="2"/>
<feature type="chain" id="PRO_1000050641" description="Small ribosomal subunit protein eS6">
    <location>
        <begin position="1"/>
        <end position="151"/>
    </location>
</feature>
<reference key="1">
    <citation type="submission" date="2007-02" db="EMBL/GenBank/DDBJ databases">
        <title>Complete sequence of Pyrobaculum calidifontis JCM 11548.</title>
        <authorList>
            <consortium name="US DOE Joint Genome Institute"/>
            <person name="Copeland A."/>
            <person name="Lucas S."/>
            <person name="Lapidus A."/>
            <person name="Barry K."/>
            <person name="Glavina del Rio T."/>
            <person name="Dalin E."/>
            <person name="Tice H."/>
            <person name="Pitluck S."/>
            <person name="Chain P."/>
            <person name="Malfatti S."/>
            <person name="Shin M."/>
            <person name="Vergez L."/>
            <person name="Schmutz J."/>
            <person name="Larimer F."/>
            <person name="Land M."/>
            <person name="Hauser L."/>
            <person name="Kyrpides N."/>
            <person name="Mikhailova N."/>
            <person name="Cozen A.E."/>
            <person name="Fitz-Gibbon S.T."/>
            <person name="House C.H."/>
            <person name="Saltikov C."/>
            <person name="Lowe T.M."/>
            <person name="Richardson P."/>
        </authorList>
    </citation>
    <scope>NUCLEOTIDE SEQUENCE [LARGE SCALE GENOMIC DNA]</scope>
    <source>
        <strain>DSM 21063 / JCM 11548 / VA1</strain>
    </source>
</reference>
<keyword id="KW-0002">3D-structure</keyword>
<keyword id="KW-0687">Ribonucleoprotein</keyword>
<keyword id="KW-0689">Ribosomal protein</keyword>
<proteinExistence type="evidence at protein level"/>
<dbReference type="EMBL" id="CP000561">
    <property type="protein sequence ID" value="ABO08247.1"/>
    <property type="molecule type" value="Genomic_DNA"/>
</dbReference>
<dbReference type="RefSeq" id="WP_011849505.1">
    <property type="nucleotide sequence ID" value="NC_009073.1"/>
</dbReference>
<dbReference type="PDB" id="9E71">
    <property type="method" value="EM"/>
    <property type="resolution" value="2.36 A"/>
    <property type="chains" value="BG=1-151"/>
</dbReference>
<dbReference type="PDB" id="9E7F">
    <property type="method" value="EM"/>
    <property type="resolution" value="2.53 A"/>
    <property type="chains" value="BG=1-151"/>
</dbReference>
<dbReference type="PDBsum" id="9E71"/>
<dbReference type="PDBsum" id="9E7F"/>
<dbReference type="EMDB" id="EMD-47628"/>
<dbReference type="EMDB" id="EMD-47668"/>
<dbReference type="SMR" id="A3MUD0"/>
<dbReference type="STRING" id="410359.Pcal_0821"/>
<dbReference type="GeneID" id="4909251"/>
<dbReference type="KEGG" id="pcl:Pcal_0821"/>
<dbReference type="eggNOG" id="arCOG01946">
    <property type="taxonomic scope" value="Archaea"/>
</dbReference>
<dbReference type="HOGENOM" id="CLU_109671_1_1_2"/>
<dbReference type="OrthoDB" id="7793at2157"/>
<dbReference type="Proteomes" id="UP000001431">
    <property type="component" value="Chromosome"/>
</dbReference>
<dbReference type="GO" id="GO:1990904">
    <property type="term" value="C:ribonucleoprotein complex"/>
    <property type="evidence" value="ECO:0007669"/>
    <property type="project" value="UniProtKB-KW"/>
</dbReference>
<dbReference type="GO" id="GO:0005840">
    <property type="term" value="C:ribosome"/>
    <property type="evidence" value="ECO:0007669"/>
    <property type="project" value="UniProtKB-KW"/>
</dbReference>
<dbReference type="GO" id="GO:0003735">
    <property type="term" value="F:structural constituent of ribosome"/>
    <property type="evidence" value="ECO:0007669"/>
    <property type="project" value="InterPro"/>
</dbReference>
<dbReference type="GO" id="GO:0006412">
    <property type="term" value="P:translation"/>
    <property type="evidence" value="ECO:0007669"/>
    <property type="project" value="UniProtKB-UniRule"/>
</dbReference>
<dbReference type="HAMAP" id="MF_00512">
    <property type="entry name" value="Ribosomal_eS6"/>
    <property type="match status" value="1"/>
</dbReference>
<dbReference type="InterPro" id="IPR001377">
    <property type="entry name" value="Ribosomal_eS6"/>
</dbReference>
<dbReference type="InterPro" id="IPR020924">
    <property type="entry name" value="Ribosomal_eS6_arc"/>
</dbReference>
<dbReference type="InterPro" id="IPR018282">
    <property type="entry name" value="Ribosomal_eS6_CS"/>
</dbReference>
<dbReference type="NCBIfam" id="NF003293">
    <property type="entry name" value="PRK04290.1-2"/>
    <property type="match status" value="1"/>
</dbReference>
<dbReference type="PANTHER" id="PTHR11502">
    <property type="entry name" value="40S RIBOSOMAL PROTEIN S6"/>
    <property type="match status" value="1"/>
</dbReference>
<dbReference type="Pfam" id="PF01092">
    <property type="entry name" value="Ribosomal_S6e"/>
    <property type="match status" value="1"/>
</dbReference>
<dbReference type="SMART" id="SM01405">
    <property type="entry name" value="Ribosomal_S6e"/>
    <property type="match status" value="1"/>
</dbReference>
<dbReference type="PROSITE" id="PS00578">
    <property type="entry name" value="RIBOSOMAL_S6E"/>
    <property type="match status" value="1"/>
</dbReference>
<comment type="similarity">
    <text evidence="1">Belongs to the eukaryotic ribosomal protein eS6 family.</text>
</comment>
<name>RS6E_PYRCJ</name>
<gene>
    <name evidence="1" type="primary">rps6e</name>
    <name type="ordered locus">Pcal_0821</name>
</gene>
<sequence length="151" mass="16222">MPTFKLVLSDPLSGKARQFEIKDPLAQRFVGLRIGEEIDGTVLKELIELPKGVKIRITGGSGVEGAPMHPGVPGPVKRYILADGPPGYRPRKRGMRKKKLVRGDTITDSIVQINAVLVYPEGYSGPPAIPLGAKELEKLKGGKTEEAAASQ</sequence>
<protein>
    <recommendedName>
        <fullName evidence="1">Small ribosomal subunit protein eS6</fullName>
    </recommendedName>
    <alternativeName>
        <fullName evidence="2">30S ribosomal protein S6e</fullName>
    </alternativeName>
</protein>
<organism>
    <name type="scientific">Pyrobaculum calidifontis (strain DSM 21063 / JCM 11548 / VA1)</name>
    <dbReference type="NCBI Taxonomy" id="410359"/>
    <lineage>
        <taxon>Archaea</taxon>
        <taxon>Thermoproteota</taxon>
        <taxon>Thermoprotei</taxon>
        <taxon>Thermoproteales</taxon>
        <taxon>Thermoproteaceae</taxon>
        <taxon>Pyrobaculum</taxon>
    </lineage>
</organism>
<accession>A3MUD0</accession>